<organism>
    <name type="scientific">Mycobacterium sp. (strain JLS)</name>
    <dbReference type="NCBI Taxonomy" id="164757"/>
    <lineage>
        <taxon>Bacteria</taxon>
        <taxon>Bacillati</taxon>
        <taxon>Actinomycetota</taxon>
        <taxon>Actinomycetes</taxon>
        <taxon>Mycobacteriales</taxon>
        <taxon>Mycobacteriaceae</taxon>
        <taxon>Mycobacterium</taxon>
    </lineage>
</organism>
<feature type="chain" id="PRO_1000063873" description="3-isopropylmalate dehydrogenase">
    <location>
        <begin position="1"/>
        <end position="336"/>
    </location>
</feature>
<feature type="binding site" evidence="1">
    <location>
        <position position="87"/>
    </location>
    <ligand>
        <name>substrate</name>
    </ligand>
</feature>
<feature type="binding site" evidence="1">
    <location>
        <position position="97"/>
    </location>
    <ligand>
        <name>substrate</name>
    </ligand>
</feature>
<feature type="binding site" evidence="1">
    <location>
        <position position="121"/>
    </location>
    <ligand>
        <name>substrate</name>
    </ligand>
</feature>
<feature type="binding site" evidence="1">
    <location>
        <position position="211"/>
    </location>
    <ligand>
        <name>Mg(2+)</name>
        <dbReference type="ChEBI" id="CHEBI:18420"/>
    </ligand>
</feature>
<feature type="binding site" evidence="1">
    <location>
        <position position="211"/>
    </location>
    <ligand>
        <name>substrate</name>
    </ligand>
</feature>
<feature type="binding site" evidence="1">
    <location>
        <position position="235"/>
    </location>
    <ligand>
        <name>Mg(2+)</name>
        <dbReference type="ChEBI" id="CHEBI:18420"/>
    </ligand>
</feature>
<feature type="binding site" evidence="1">
    <location>
        <position position="239"/>
    </location>
    <ligand>
        <name>Mg(2+)</name>
        <dbReference type="ChEBI" id="CHEBI:18420"/>
    </ligand>
</feature>
<feature type="binding site" evidence="1">
    <location>
        <begin position="271"/>
        <end position="283"/>
    </location>
    <ligand>
        <name>NAD(+)</name>
        <dbReference type="ChEBI" id="CHEBI:57540"/>
    </ligand>
</feature>
<feature type="site" description="Important for catalysis" evidence="1">
    <location>
        <position position="128"/>
    </location>
</feature>
<feature type="site" description="Important for catalysis" evidence="1">
    <location>
        <position position="178"/>
    </location>
</feature>
<evidence type="ECO:0000255" key="1">
    <source>
        <dbReference type="HAMAP-Rule" id="MF_01035"/>
    </source>
</evidence>
<name>LEU3_MYCSJ</name>
<proteinExistence type="inferred from homology"/>
<reference key="1">
    <citation type="submission" date="2007-02" db="EMBL/GenBank/DDBJ databases">
        <title>Complete sequence of Mycobacterium sp. JLS.</title>
        <authorList>
            <consortium name="US DOE Joint Genome Institute"/>
            <person name="Copeland A."/>
            <person name="Lucas S."/>
            <person name="Lapidus A."/>
            <person name="Barry K."/>
            <person name="Detter J.C."/>
            <person name="Glavina del Rio T."/>
            <person name="Hammon N."/>
            <person name="Israni S."/>
            <person name="Dalin E."/>
            <person name="Tice H."/>
            <person name="Pitluck S."/>
            <person name="Chain P."/>
            <person name="Malfatti S."/>
            <person name="Shin M."/>
            <person name="Vergez L."/>
            <person name="Schmutz J."/>
            <person name="Larimer F."/>
            <person name="Land M."/>
            <person name="Hauser L."/>
            <person name="Kyrpides N."/>
            <person name="Mikhailova N."/>
            <person name="Miller C.D."/>
            <person name="Anderson A.J."/>
            <person name="Sims R.C."/>
            <person name="Richardson P."/>
        </authorList>
    </citation>
    <scope>NUCLEOTIDE SEQUENCE [LARGE SCALE GENOMIC DNA]</scope>
    <source>
        <strain>JLS</strain>
    </source>
</reference>
<keyword id="KW-0028">Amino-acid biosynthesis</keyword>
<keyword id="KW-0100">Branched-chain amino acid biosynthesis</keyword>
<keyword id="KW-0963">Cytoplasm</keyword>
<keyword id="KW-0432">Leucine biosynthesis</keyword>
<keyword id="KW-0460">Magnesium</keyword>
<keyword id="KW-0464">Manganese</keyword>
<keyword id="KW-0479">Metal-binding</keyword>
<keyword id="KW-0520">NAD</keyword>
<keyword id="KW-0560">Oxidoreductase</keyword>
<sequence>MNLAIIAGDGIGPEVIGEAVKVLDAVLPEVEKTTYDLGARRYHATGEILPDSVLEELKVHDAILLGAIGDPSVPSGVLERGLLLRIRFALDHHINLRPAKLYSGVTGPLAGNPEIDFVVVREGTEGPYTGTGGAIRVGTPHEVATEVSLNTAFGVRRVVEDAFRRAQQRRKHLTLVHKNNVLTFAGALWWRTVQEVGAEYPDVEIAYQHVDSAMIHIVTDPGRFDVIVTDNLFGDIVTDLAAAVCGGIGLAASGNIDATRTNPSMFEPVHGSAPDIAGQGIADPTAAIMSVALLLAHVGETDAAARVDKAVEAHLSSRGDQELGTAAVGDRIVGLL</sequence>
<protein>
    <recommendedName>
        <fullName evidence="1">3-isopropylmalate dehydrogenase</fullName>
        <ecNumber evidence="1">1.1.1.85</ecNumber>
    </recommendedName>
    <alternativeName>
        <fullName evidence="1">3-IPM-DH</fullName>
    </alternativeName>
    <alternativeName>
        <fullName evidence="1">Beta-IPM dehydrogenase</fullName>
        <shortName evidence="1">IMDH</shortName>
    </alternativeName>
</protein>
<gene>
    <name evidence="1" type="primary">leuB</name>
    <name type="ordered locus">Mjls_1891</name>
</gene>
<dbReference type="EC" id="1.1.1.85" evidence="1"/>
<dbReference type="EMBL" id="CP000580">
    <property type="protein sequence ID" value="ABN97679.1"/>
    <property type="molecule type" value="Genomic_DNA"/>
</dbReference>
<dbReference type="SMR" id="A3PXQ2"/>
<dbReference type="KEGG" id="mjl:Mjls_1891"/>
<dbReference type="HOGENOM" id="CLU_031953_0_1_11"/>
<dbReference type="BioCyc" id="MSP164757:G1G8C-1908-MONOMER"/>
<dbReference type="UniPathway" id="UPA00048">
    <property type="reaction ID" value="UER00072"/>
</dbReference>
<dbReference type="GO" id="GO:0005737">
    <property type="term" value="C:cytoplasm"/>
    <property type="evidence" value="ECO:0007669"/>
    <property type="project" value="UniProtKB-SubCell"/>
</dbReference>
<dbReference type="GO" id="GO:0003862">
    <property type="term" value="F:3-isopropylmalate dehydrogenase activity"/>
    <property type="evidence" value="ECO:0007669"/>
    <property type="project" value="UniProtKB-UniRule"/>
</dbReference>
<dbReference type="GO" id="GO:0000287">
    <property type="term" value="F:magnesium ion binding"/>
    <property type="evidence" value="ECO:0007669"/>
    <property type="project" value="InterPro"/>
</dbReference>
<dbReference type="GO" id="GO:0051287">
    <property type="term" value="F:NAD binding"/>
    <property type="evidence" value="ECO:0007669"/>
    <property type="project" value="InterPro"/>
</dbReference>
<dbReference type="GO" id="GO:0009098">
    <property type="term" value="P:L-leucine biosynthetic process"/>
    <property type="evidence" value="ECO:0007669"/>
    <property type="project" value="UniProtKB-UniRule"/>
</dbReference>
<dbReference type="Gene3D" id="3.40.718.10">
    <property type="entry name" value="Isopropylmalate Dehydrogenase"/>
    <property type="match status" value="1"/>
</dbReference>
<dbReference type="HAMAP" id="MF_01035">
    <property type="entry name" value="LeuB_type2"/>
    <property type="match status" value="1"/>
</dbReference>
<dbReference type="InterPro" id="IPR050501">
    <property type="entry name" value="ICDH/IPMDH"/>
</dbReference>
<dbReference type="InterPro" id="IPR019818">
    <property type="entry name" value="IsoCit/isopropylmalate_DH_CS"/>
</dbReference>
<dbReference type="InterPro" id="IPR024084">
    <property type="entry name" value="IsoPropMal-DH-like_dom"/>
</dbReference>
<dbReference type="InterPro" id="IPR023698">
    <property type="entry name" value="LeuB_actb"/>
</dbReference>
<dbReference type="NCBIfam" id="NF002898">
    <property type="entry name" value="PRK03437.1"/>
    <property type="match status" value="1"/>
</dbReference>
<dbReference type="PANTHER" id="PTHR43275">
    <property type="entry name" value="D-MALATE DEHYDROGENASE [DECARBOXYLATING]"/>
    <property type="match status" value="1"/>
</dbReference>
<dbReference type="PANTHER" id="PTHR43275:SF1">
    <property type="entry name" value="D-MALATE DEHYDROGENASE [DECARBOXYLATING]"/>
    <property type="match status" value="1"/>
</dbReference>
<dbReference type="Pfam" id="PF00180">
    <property type="entry name" value="Iso_dh"/>
    <property type="match status" value="1"/>
</dbReference>
<dbReference type="SMART" id="SM01329">
    <property type="entry name" value="Iso_dh"/>
    <property type="match status" value="1"/>
</dbReference>
<dbReference type="SUPFAM" id="SSF53659">
    <property type="entry name" value="Isocitrate/Isopropylmalate dehydrogenase-like"/>
    <property type="match status" value="1"/>
</dbReference>
<dbReference type="PROSITE" id="PS00470">
    <property type="entry name" value="IDH_IMDH"/>
    <property type="match status" value="1"/>
</dbReference>
<accession>A3PXQ2</accession>
<comment type="function">
    <text evidence="1">Catalyzes the oxidation of 3-carboxy-2-hydroxy-4-methylpentanoate (3-isopropylmalate) to 3-carboxy-4-methyl-2-oxopentanoate. The product decarboxylates to 4-methyl-2 oxopentanoate.</text>
</comment>
<comment type="catalytic activity">
    <reaction evidence="1">
        <text>(2R,3S)-3-isopropylmalate + NAD(+) = 4-methyl-2-oxopentanoate + CO2 + NADH</text>
        <dbReference type="Rhea" id="RHEA:32271"/>
        <dbReference type="ChEBI" id="CHEBI:16526"/>
        <dbReference type="ChEBI" id="CHEBI:17865"/>
        <dbReference type="ChEBI" id="CHEBI:35121"/>
        <dbReference type="ChEBI" id="CHEBI:57540"/>
        <dbReference type="ChEBI" id="CHEBI:57945"/>
        <dbReference type="EC" id="1.1.1.85"/>
    </reaction>
</comment>
<comment type="cofactor">
    <cofactor evidence="1">
        <name>Mg(2+)</name>
        <dbReference type="ChEBI" id="CHEBI:18420"/>
    </cofactor>
    <cofactor evidence="1">
        <name>Mn(2+)</name>
        <dbReference type="ChEBI" id="CHEBI:29035"/>
    </cofactor>
    <text evidence="1">Binds 1 Mg(2+) or Mn(2+) ion per subunit.</text>
</comment>
<comment type="pathway">
    <text evidence="1">Amino-acid biosynthesis; L-leucine biosynthesis; L-leucine from 3-methyl-2-oxobutanoate: step 3/4.</text>
</comment>
<comment type="subunit">
    <text evidence="1">Homodimer.</text>
</comment>
<comment type="subcellular location">
    <subcellularLocation>
        <location evidence="1">Cytoplasm</location>
    </subcellularLocation>
</comment>
<comment type="similarity">
    <text evidence="1">Belongs to the isocitrate and isopropylmalate dehydrogenases family. LeuB type 2 subfamily.</text>
</comment>